<proteinExistence type="inferred from homology"/>
<comment type="function">
    <text evidence="1">Catalyzes the attachment of glutamate to tRNA(Glu) in a two-step reaction: glutamate is first activated by ATP to form Glu-AMP and then transferred to the acceptor end of tRNA(Glu).</text>
</comment>
<comment type="catalytic activity">
    <reaction evidence="1">
        <text>tRNA(Glu) + L-glutamate + ATP = L-glutamyl-tRNA(Glu) + AMP + diphosphate</text>
        <dbReference type="Rhea" id="RHEA:23540"/>
        <dbReference type="Rhea" id="RHEA-COMP:9663"/>
        <dbReference type="Rhea" id="RHEA-COMP:9680"/>
        <dbReference type="ChEBI" id="CHEBI:29985"/>
        <dbReference type="ChEBI" id="CHEBI:30616"/>
        <dbReference type="ChEBI" id="CHEBI:33019"/>
        <dbReference type="ChEBI" id="CHEBI:78442"/>
        <dbReference type="ChEBI" id="CHEBI:78520"/>
        <dbReference type="ChEBI" id="CHEBI:456215"/>
        <dbReference type="EC" id="6.1.1.17"/>
    </reaction>
</comment>
<comment type="subunit">
    <text evidence="1">Monomer.</text>
</comment>
<comment type="subcellular location">
    <subcellularLocation>
        <location evidence="1">Cytoplasm</location>
    </subcellularLocation>
</comment>
<comment type="similarity">
    <text evidence="1">Belongs to the class-I aminoacyl-tRNA synthetase family. Glutamate--tRNA ligase type 1 subfamily.</text>
</comment>
<dbReference type="EC" id="6.1.1.17" evidence="1"/>
<dbReference type="EMBL" id="AF108766">
    <property type="protein sequence ID" value="AAD09123.1"/>
    <property type="molecule type" value="Genomic_DNA"/>
</dbReference>
<dbReference type="EMBL" id="CP000143">
    <property type="protein sequence ID" value="ABA78145.1"/>
    <property type="molecule type" value="Genomic_DNA"/>
</dbReference>
<dbReference type="PIR" id="T46860">
    <property type="entry name" value="T46860"/>
</dbReference>
<dbReference type="RefSeq" id="WP_011337143.1">
    <property type="nucleotide sequence ID" value="NC_007493.2"/>
</dbReference>
<dbReference type="RefSeq" id="YP_352046.1">
    <property type="nucleotide sequence ID" value="NC_007493.2"/>
</dbReference>
<dbReference type="SMR" id="Q9ZFA3"/>
<dbReference type="STRING" id="272943.RSP_1995"/>
<dbReference type="EnsemblBacteria" id="ABA78145">
    <property type="protein sequence ID" value="ABA78145"/>
    <property type="gene ID" value="RSP_1995"/>
</dbReference>
<dbReference type="GeneID" id="3719328"/>
<dbReference type="KEGG" id="rsp:RSP_1995"/>
<dbReference type="PATRIC" id="fig|272943.9.peg.884"/>
<dbReference type="eggNOG" id="COG0008">
    <property type="taxonomic scope" value="Bacteria"/>
</dbReference>
<dbReference type="OrthoDB" id="9807503at2"/>
<dbReference type="PhylomeDB" id="Q9ZFA3"/>
<dbReference type="Proteomes" id="UP000002703">
    <property type="component" value="Chromosome 1"/>
</dbReference>
<dbReference type="GO" id="GO:0005829">
    <property type="term" value="C:cytosol"/>
    <property type="evidence" value="ECO:0007669"/>
    <property type="project" value="TreeGrafter"/>
</dbReference>
<dbReference type="GO" id="GO:0005524">
    <property type="term" value="F:ATP binding"/>
    <property type="evidence" value="ECO:0007669"/>
    <property type="project" value="UniProtKB-UniRule"/>
</dbReference>
<dbReference type="GO" id="GO:0004818">
    <property type="term" value="F:glutamate-tRNA ligase activity"/>
    <property type="evidence" value="ECO:0007669"/>
    <property type="project" value="UniProtKB-UniRule"/>
</dbReference>
<dbReference type="GO" id="GO:0000049">
    <property type="term" value="F:tRNA binding"/>
    <property type="evidence" value="ECO:0007669"/>
    <property type="project" value="InterPro"/>
</dbReference>
<dbReference type="GO" id="GO:0008270">
    <property type="term" value="F:zinc ion binding"/>
    <property type="evidence" value="ECO:0007669"/>
    <property type="project" value="InterPro"/>
</dbReference>
<dbReference type="GO" id="GO:0006424">
    <property type="term" value="P:glutamyl-tRNA aminoacylation"/>
    <property type="evidence" value="ECO:0007669"/>
    <property type="project" value="UniProtKB-UniRule"/>
</dbReference>
<dbReference type="CDD" id="cd00808">
    <property type="entry name" value="GluRS_core"/>
    <property type="match status" value="1"/>
</dbReference>
<dbReference type="FunFam" id="3.40.50.620:FF:000007">
    <property type="entry name" value="Glutamate--tRNA ligase"/>
    <property type="match status" value="1"/>
</dbReference>
<dbReference type="Gene3D" id="1.10.10.350">
    <property type="match status" value="1"/>
</dbReference>
<dbReference type="Gene3D" id="3.40.50.620">
    <property type="entry name" value="HUPs"/>
    <property type="match status" value="1"/>
</dbReference>
<dbReference type="HAMAP" id="MF_00022">
    <property type="entry name" value="Glu_tRNA_synth_type1"/>
    <property type="match status" value="1"/>
</dbReference>
<dbReference type="InterPro" id="IPR045462">
    <property type="entry name" value="aa-tRNA-synth_I_cd-bd"/>
</dbReference>
<dbReference type="InterPro" id="IPR020751">
    <property type="entry name" value="aa-tRNA-synth_I_codon-bd_sub2"/>
</dbReference>
<dbReference type="InterPro" id="IPR001412">
    <property type="entry name" value="aa-tRNA-synth_I_CS"/>
</dbReference>
<dbReference type="InterPro" id="IPR008925">
    <property type="entry name" value="aa_tRNA-synth_I_cd-bd_sf"/>
</dbReference>
<dbReference type="InterPro" id="IPR004527">
    <property type="entry name" value="Glu-tRNA-ligase_bac/mito"/>
</dbReference>
<dbReference type="InterPro" id="IPR000924">
    <property type="entry name" value="Glu/Gln-tRNA-synth"/>
</dbReference>
<dbReference type="InterPro" id="IPR020058">
    <property type="entry name" value="Glu/Gln-tRNA-synth_Ib_cat-dom"/>
</dbReference>
<dbReference type="InterPro" id="IPR049940">
    <property type="entry name" value="GluQ/Sye"/>
</dbReference>
<dbReference type="InterPro" id="IPR033910">
    <property type="entry name" value="GluRS_core"/>
</dbReference>
<dbReference type="InterPro" id="IPR014729">
    <property type="entry name" value="Rossmann-like_a/b/a_fold"/>
</dbReference>
<dbReference type="NCBIfam" id="TIGR00464">
    <property type="entry name" value="gltX_bact"/>
    <property type="match status" value="1"/>
</dbReference>
<dbReference type="PANTHER" id="PTHR43311">
    <property type="entry name" value="GLUTAMATE--TRNA LIGASE"/>
    <property type="match status" value="1"/>
</dbReference>
<dbReference type="PANTHER" id="PTHR43311:SF2">
    <property type="entry name" value="GLUTAMATE--TRNA LIGASE, MITOCHONDRIAL-RELATED"/>
    <property type="match status" value="1"/>
</dbReference>
<dbReference type="Pfam" id="PF19269">
    <property type="entry name" value="Anticodon_2"/>
    <property type="match status" value="1"/>
</dbReference>
<dbReference type="Pfam" id="PF00749">
    <property type="entry name" value="tRNA-synt_1c"/>
    <property type="match status" value="1"/>
</dbReference>
<dbReference type="PRINTS" id="PR00987">
    <property type="entry name" value="TRNASYNTHGLU"/>
</dbReference>
<dbReference type="SUPFAM" id="SSF48163">
    <property type="entry name" value="An anticodon-binding domain of class I aminoacyl-tRNA synthetases"/>
    <property type="match status" value="1"/>
</dbReference>
<dbReference type="SUPFAM" id="SSF52374">
    <property type="entry name" value="Nucleotidylyl transferase"/>
    <property type="match status" value="1"/>
</dbReference>
<dbReference type="PROSITE" id="PS00178">
    <property type="entry name" value="AA_TRNA_LIGASE_I"/>
    <property type="match status" value="1"/>
</dbReference>
<protein>
    <recommendedName>
        <fullName evidence="1">Glutamate--tRNA ligase 1</fullName>
        <ecNumber evidence="1">6.1.1.17</ecNumber>
    </recommendedName>
    <alternativeName>
        <fullName evidence="1">Glutamyl-tRNA synthetase 1</fullName>
        <shortName evidence="1">GluRS 1</shortName>
    </alternativeName>
</protein>
<feature type="chain" id="PRO_0000119637" description="Glutamate--tRNA ligase 1">
    <location>
        <begin position="1"/>
        <end position="471"/>
    </location>
</feature>
<feature type="short sequence motif" description="'HIGH' region" evidence="1">
    <location>
        <begin position="15"/>
        <end position="25"/>
    </location>
</feature>
<feature type="short sequence motif" description="'KMSKS' region" evidence="1">
    <location>
        <begin position="243"/>
        <end position="247"/>
    </location>
</feature>
<feature type="binding site" evidence="1">
    <location>
        <position position="246"/>
    </location>
    <ligand>
        <name>ATP</name>
        <dbReference type="ChEBI" id="CHEBI:30616"/>
    </ligand>
</feature>
<gene>
    <name evidence="1" type="primary">gltX1</name>
    <name type="synonym">gluS</name>
    <name type="ordered locus">RHOS4_05770</name>
    <name type="ORF">RSP_1995</name>
</gene>
<keyword id="KW-0030">Aminoacyl-tRNA synthetase</keyword>
<keyword id="KW-0067">ATP-binding</keyword>
<keyword id="KW-0963">Cytoplasm</keyword>
<keyword id="KW-0436">Ligase</keyword>
<keyword id="KW-0547">Nucleotide-binding</keyword>
<keyword id="KW-0648">Protein biosynthesis</keyword>
<keyword id="KW-1185">Reference proteome</keyword>
<organism>
    <name type="scientific">Cereibacter sphaeroides (strain ATCC 17023 / DSM 158 / JCM 6121 / CCUG 31486 / LMG 2827 / NBRC 12203 / NCIMB 8253 / ATH 2.4.1.)</name>
    <name type="common">Rhodobacter sphaeroides</name>
    <dbReference type="NCBI Taxonomy" id="272943"/>
    <lineage>
        <taxon>Bacteria</taxon>
        <taxon>Pseudomonadati</taxon>
        <taxon>Pseudomonadota</taxon>
        <taxon>Alphaproteobacteria</taxon>
        <taxon>Rhodobacterales</taxon>
        <taxon>Paracoccaceae</taxon>
        <taxon>Cereibacter</taxon>
    </lineage>
</organism>
<reference key="1">
    <citation type="submission" date="1998-11" db="EMBL/GenBank/DDBJ databases">
        <title>Trp-ing up paradigms: distribution of tryptophan biosynthesis genes in Rhodobacter sphaeroides 2.4.1.</title>
        <authorList>
            <person name="Simmons A.E."/>
            <person name="Mackenzie R.C."/>
            <person name="Kaplan S."/>
        </authorList>
    </citation>
    <scope>NUCLEOTIDE SEQUENCE [GENOMIC DNA]</scope>
</reference>
<reference key="2">
    <citation type="submission" date="2005-09" db="EMBL/GenBank/DDBJ databases">
        <title>Complete sequence of chromosome 1 of Rhodobacter sphaeroides 2.4.1.</title>
        <authorList>
            <person name="Copeland A."/>
            <person name="Lucas S."/>
            <person name="Lapidus A."/>
            <person name="Barry K."/>
            <person name="Detter J.C."/>
            <person name="Glavina T."/>
            <person name="Hammon N."/>
            <person name="Israni S."/>
            <person name="Pitluck S."/>
            <person name="Richardson P."/>
            <person name="Mackenzie C."/>
            <person name="Choudhary M."/>
            <person name="Larimer F."/>
            <person name="Hauser L.J."/>
            <person name="Land M."/>
            <person name="Donohue T.J."/>
            <person name="Kaplan S."/>
        </authorList>
    </citation>
    <scope>NUCLEOTIDE SEQUENCE [LARGE SCALE GENOMIC DNA]</scope>
    <source>
        <strain>ATCC 17023 / DSM 158 / JCM 6121 / CCUG 31486 / LMG 2827 / NBRC 12203 / NCIMB 8253 / ATH 2.4.1.</strain>
    </source>
</reference>
<accession>Q9ZFA3</accession>
<accession>Q3J4Y9</accession>
<name>SYE1_CERS4</name>
<sequence>MPAASDKPVVTRFAPSPTGYLHIGGGRTALFNWLYARGRKGTFLLRIEDTDRERSTPEATDAILRGLTWLGLDWDGEVVSQFARKDRHAEVAREMLERGAAYKCFSTQEEIEAFRESARAEGRSTLFRSPWRDADPTSHPDAPFVIRMKAPRSGETVIEDEVQGTVRFQNETLDDMVVLRSDGTPTYMLAVVVDDHDMGVTHVIRGDDHLNNAARQTMVYEAMGWEVPVWAHIPLIHGPDGKKLSKRHGALGVEEYQAMGYPAAGMRNYLARLGWSHGDDEFFTSEQAMDWFDLGGIGRSPARLDFKKLESVCGQHIAVMEDAELMREIAAYLAAARKPALTDLQAARLEKGLYALKDRAKTFPELLEKARFALESRPIVADDAAAKALDPVSRGILRELTPMLQAASWSKQDLEAILTAFASEKGMGFGKLAAPLRTALAGRTVTPSVYDMMLVIGRDETIARLEDAAAA</sequence>
<evidence type="ECO:0000255" key="1">
    <source>
        <dbReference type="HAMAP-Rule" id="MF_00022"/>
    </source>
</evidence>